<keyword id="KW-0963">Cytoplasm</keyword>
<keyword id="KW-0343">GTPase activation</keyword>
<keyword id="KW-1185">Reference proteome</keyword>
<keyword id="KW-0728">SH3 domain</keyword>
<accession>Q54YV1</accession>
<comment type="function">
    <text evidence="1">Rho GTPase-activating protein involved in the signal transduction pathway.</text>
</comment>
<comment type="subcellular location">
    <subcellularLocation>
        <location evidence="1">Cytoplasm</location>
    </subcellularLocation>
</comment>
<dbReference type="EMBL" id="AAFI02000023">
    <property type="protein sequence ID" value="EAL68207.1"/>
    <property type="molecule type" value="Genomic_DNA"/>
</dbReference>
<dbReference type="RefSeq" id="XP_642101.1">
    <property type="nucleotide sequence ID" value="XM_637009.1"/>
</dbReference>
<dbReference type="SMR" id="Q54YV1"/>
<dbReference type="PaxDb" id="44689-DDB0233794"/>
<dbReference type="EnsemblProtists" id="EAL68207">
    <property type="protein sequence ID" value="EAL68207"/>
    <property type="gene ID" value="DDB_G0278069"/>
</dbReference>
<dbReference type="GeneID" id="8621312"/>
<dbReference type="KEGG" id="ddi:DDB_G0278069"/>
<dbReference type="dictyBase" id="DDB_G0278069">
    <property type="gene designation" value="gacII"/>
</dbReference>
<dbReference type="VEuPathDB" id="AmoebaDB:DDB_G0278069"/>
<dbReference type="eggNOG" id="KOG4270">
    <property type="taxonomic scope" value="Eukaryota"/>
</dbReference>
<dbReference type="HOGENOM" id="CLU_345958_0_0_1"/>
<dbReference type="InParanoid" id="Q54YV1"/>
<dbReference type="PRO" id="PR:Q54YV1"/>
<dbReference type="Proteomes" id="UP000002195">
    <property type="component" value="Chromosome 3"/>
</dbReference>
<dbReference type="GO" id="GO:0005737">
    <property type="term" value="C:cytoplasm"/>
    <property type="evidence" value="ECO:0007669"/>
    <property type="project" value="UniProtKB-SubCell"/>
</dbReference>
<dbReference type="GO" id="GO:0005096">
    <property type="term" value="F:GTPase activator activity"/>
    <property type="evidence" value="ECO:0007669"/>
    <property type="project" value="UniProtKB-KW"/>
</dbReference>
<dbReference type="GO" id="GO:0022607">
    <property type="term" value="P:cellular component assembly"/>
    <property type="evidence" value="ECO:0007669"/>
    <property type="project" value="UniProtKB-ARBA"/>
</dbReference>
<dbReference type="GO" id="GO:0007165">
    <property type="term" value="P:signal transduction"/>
    <property type="evidence" value="ECO:0007669"/>
    <property type="project" value="InterPro"/>
</dbReference>
<dbReference type="CDD" id="cd00159">
    <property type="entry name" value="RhoGAP"/>
    <property type="match status" value="1"/>
</dbReference>
<dbReference type="Gene3D" id="1.10.555.10">
    <property type="entry name" value="Rho GTPase activation protein"/>
    <property type="match status" value="1"/>
</dbReference>
<dbReference type="Gene3D" id="2.30.30.40">
    <property type="entry name" value="SH3 Domains"/>
    <property type="match status" value="1"/>
</dbReference>
<dbReference type="InterPro" id="IPR050729">
    <property type="entry name" value="Rho-GAP"/>
</dbReference>
<dbReference type="InterPro" id="IPR008936">
    <property type="entry name" value="Rho_GTPase_activation_prot"/>
</dbReference>
<dbReference type="InterPro" id="IPR000198">
    <property type="entry name" value="RhoGAP_dom"/>
</dbReference>
<dbReference type="InterPro" id="IPR036028">
    <property type="entry name" value="SH3-like_dom_sf"/>
</dbReference>
<dbReference type="InterPro" id="IPR001452">
    <property type="entry name" value="SH3_domain"/>
</dbReference>
<dbReference type="PANTHER" id="PTHR23176:SF129">
    <property type="entry name" value="RHO GTPASE ACTIVATING PROTEIN AT 16F, ISOFORM E-RELATED"/>
    <property type="match status" value="1"/>
</dbReference>
<dbReference type="PANTHER" id="PTHR23176">
    <property type="entry name" value="RHO/RAC/CDC GTPASE-ACTIVATING PROTEIN"/>
    <property type="match status" value="1"/>
</dbReference>
<dbReference type="Pfam" id="PF00620">
    <property type="entry name" value="RhoGAP"/>
    <property type="match status" value="1"/>
</dbReference>
<dbReference type="SMART" id="SM00324">
    <property type="entry name" value="RhoGAP"/>
    <property type="match status" value="1"/>
</dbReference>
<dbReference type="SUPFAM" id="SSF48350">
    <property type="entry name" value="GTPase activation domain, GAP"/>
    <property type="match status" value="1"/>
</dbReference>
<dbReference type="SUPFAM" id="SSF50044">
    <property type="entry name" value="SH3-domain"/>
    <property type="match status" value="1"/>
</dbReference>
<dbReference type="PROSITE" id="PS50238">
    <property type="entry name" value="RHOGAP"/>
    <property type="match status" value="1"/>
</dbReference>
<dbReference type="PROSITE" id="PS50002">
    <property type="entry name" value="SH3"/>
    <property type="match status" value="1"/>
</dbReference>
<evidence type="ECO:0000250" key="1"/>
<evidence type="ECO:0000255" key="2">
    <source>
        <dbReference type="PROSITE-ProRule" id="PRU00172"/>
    </source>
</evidence>
<evidence type="ECO:0000255" key="3">
    <source>
        <dbReference type="PROSITE-ProRule" id="PRU00192"/>
    </source>
</evidence>
<evidence type="ECO:0000256" key="4">
    <source>
        <dbReference type="SAM" id="MobiDB-lite"/>
    </source>
</evidence>
<protein>
    <recommendedName>
        <fullName>Rho GTPase-activating protein gacII</fullName>
    </recommendedName>
    <alternativeName>
        <fullName>GTPase activating factor for raC protein II</fullName>
    </alternativeName>
</protein>
<proteinExistence type="inferred from homology"/>
<feature type="chain" id="PRO_0000380206" description="Rho GTPase-activating protein gacII">
    <location>
        <begin position="1"/>
        <end position="817"/>
    </location>
</feature>
<feature type="domain" description="Rho-GAP" evidence="2">
    <location>
        <begin position="20"/>
        <end position="204"/>
    </location>
</feature>
<feature type="domain" description="SH3" evidence="3">
    <location>
        <begin position="238"/>
        <end position="298"/>
    </location>
</feature>
<feature type="region of interest" description="Disordered" evidence="4">
    <location>
        <begin position="318"/>
        <end position="638"/>
    </location>
</feature>
<feature type="region of interest" description="Disordered" evidence="4">
    <location>
        <begin position="691"/>
        <end position="771"/>
    </location>
</feature>
<feature type="region of interest" description="Disordered" evidence="4">
    <location>
        <begin position="783"/>
        <end position="817"/>
    </location>
</feature>
<feature type="compositionally biased region" description="Low complexity" evidence="4">
    <location>
        <begin position="318"/>
        <end position="339"/>
    </location>
</feature>
<feature type="compositionally biased region" description="Polar residues" evidence="4">
    <location>
        <begin position="340"/>
        <end position="358"/>
    </location>
</feature>
<feature type="compositionally biased region" description="Low complexity" evidence="4">
    <location>
        <begin position="359"/>
        <end position="391"/>
    </location>
</feature>
<feature type="compositionally biased region" description="Polar residues" evidence="4">
    <location>
        <begin position="396"/>
        <end position="438"/>
    </location>
</feature>
<feature type="compositionally biased region" description="Pro residues" evidence="4">
    <location>
        <begin position="461"/>
        <end position="471"/>
    </location>
</feature>
<feature type="compositionally biased region" description="Low complexity" evidence="4">
    <location>
        <begin position="472"/>
        <end position="498"/>
    </location>
</feature>
<feature type="compositionally biased region" description="Polar residues" evidence="4">
    <location>
        <begin position="509"/>
        <end position="532"/>
    </location>
</feature>
<feature type="compositionally biased region" description="Low complexity" evidence="4">
    <location>
        <begin position="534"/>
        <end position="568"/>
    </location>
</feature>
<feature type="compositionally biased region" description="Low complexity" evidence="4">
    <location>
        <begin position="577"/>
        <end position="587"/>
    </location>
</feature>
<feature type="compositionally biased region" description="Low complexity" evidence="4">
    <location>
        <begin position="607"/>
        <end position="624"/>
    </location>
</feature>
<feature type="compositionally biased region" description="Pro residues" evidence="4">
    <location>
        <begin position="625"/>
        <end position="635"/>
    </location>
</feature>
<feature type="compositionally biased region" description="Polar residues" evidence="4">
    <location>
        <begin position="705"/>
        <end position="722"/>
    </location>
</feature>
<feature type="compositionally biased region" description="Pro residues" evidence="4">
    <location>
        <begin position="725"/>
        <end position="734"/>
    </location>
</feature>
<feature type="compositionally biased region" description="Low complexity" evidence="4">
    <location>
        <begin position="735"/>
        <end position="744"/>
    </location>
</feature>
<feature type="compositionally biased region" description="Low complexity" evidence="4">
    <location>
        <begin position="752"/>
        <end position="771"/>
    </location>
</feature>
<feature type="compositionally biased region" description="Polar residues" evidence="4">
    <location>
        <begin position="785"/>
        <end position="803"/>
    </location>
</feature>
<feature type="compositionally biased region" description="Pro residues" evidence="4">
    <location>
        <begin position="807"/>
        <end position="817"/>
    </location>
</feature>
<feature type="site" description="Arginine finger; crucial for GTP hydrolysis by stabilizing the transition state" evidence="2">
    <location>
        <position position="51"/>
    </location>
</feature>
<organism>
    <name type="scientific">Dictyostelium discoideum</name>
    <name type="common">Social amoeba</name>
    <dbReference type="NCBI Taxonomy" id="44689"/>
    <lineage>
        <taxon>Eukaryota</taxon>
        <taxon>Amoebozoa</taxon>
        <taxon>Evosea</taxon>
        <taxon>Eumycetozoa</taxon>
        <taxon>Dictyostelia</taxon>
        <taxon>Dictyosteliales</taxon>
        <taxon>Dictyosteliaceae</taxon>
        <taxon>Dictyostelium</taxon>
    </lineage>
</organism>
<reference key="1">
    <citation type="journal article" date="2005" name="Nature">
        <title>The genome of the social amoeba Dictyostelium discoideum.</title>
        <authorList>
            <person name="Eichinger L."/>
            <person name="Pachebat J.A."/>
            <person name="Gloeckner G."/>
            <person name="Rajandream M.A."/>
            <person name="Sucgang R."/>
            <person name="Berriman M."/>
            <person name="Song J."/>
            <person name="Olsen R."/>
            <person name="Szafranski K."/>
            <person name="Xu Q."/>
            <person name="Tunggal B."/>
            <person name="Kummerfeld S."/>
            <person name="Madera M."/>
            <person name="Konfortov B.A."/>
            <person name="Rivero F."/>
            <person name="Bankier A.T."/>
            <person name="Lehmann R."/>
            <person name="Hamlin N."/>
            <person name="Davies R."/>
            <person name="Gaudet P."/>
            <person name="Fey P."/>
            <person name="Pilcher K."/>
            <person name="Chen G."/>
            <person name="Saunders D."/>
            <person name="Sodergren E.J."/>
            <person name="Davis P."/>
            <person name="Kerhornou A."/>
            <person name="Nie X."/>
            <person name="Hall N."/>
            <person name="Anjard C."/>
            <person name="Hemphill L."/>
            <person name="Bason N."/>
            <person name="Farbrother P."/>
            <person name="Desany B."/>
            <person name="Just E."/>
            <person name="Morio T."/>
            <person name="Rost R."/>
            <person name="Churcher C.M."/>
            <person name="Cooper J."/>
            <person name="Haydock S."/>
            <person name="van Driessche N."/>
            <person name="Cronin A."/>
            <person name="Goodhead I."/>
            <person name="Muzny D.M."/>
            <person name="Mourier T."/>
            <person name="Pain A."/>
            <person name="Lu M."/>
            <person name="Harper D."/>
            <person name="Lindsay R."/>
            <person name="Hauser H."/>
            <person name="James K.D."/>
            <person name="Quiles M."/>
            <person name="Madan Babu M."/>
            <person name="Saito T."/>
            <person name="Buchrieser C."/>
            <person name="Wardroper A."/>
            <person name="Felder M."/>
            <person name="Thangavelu M."/>
            <person name="Johnson D."/>
            <person name="Knights A."/>
            <person name="Loulseged H."/>
            <person name="Mungall K.L."/>
            <person name="Oliver K."/>
            <person name="Price C."/>
            <person name="Quail M.A."/>
            <person name="Urushihara H."/>
            <person name="Hernandez J."/>
            <person name="Rabbinowitsch E."/>
            <person name="Steffen D."/>
            <person name="Sanders M."/>
            <person name="Ma J."/>
            <person name="Kohara Y."/>
            <person name="Sharp S."/>
            <person name="Simmonds M.N."/>
            <person name="Spiegler S."/>
            <person name="Tivey A."/>
            <person name="Sugano S."/>
            <person name="White B."/>
            <person name="Walker D."/>
            <person name="Woodward J.R."/>
            <person name="Winckler T."/>
            <person name="Tanaka Y."/>
            <person name="Shaulsky G."/>
            <person name="Schleicher M."/>
            <person name="Weinstock G.M."/>
            <person name="Rosenthal A."/>
            <person name="Cox E.C."/>
            <person name="Chisholm R.L."/>
            <person name="Gibbs R.A."/>
            <person name="Loomis W.F."/>
            <person name="Platzer M."/>
            <person name="Kay R.R."/>
            <person name="Williams J.G."/>
            <person name="Dear P.H."/>
            <person name="Noegel A.A."/>
            <person name="Barrell B.G."/>
            <person name="Kuspa A."/>
        </authorList>
    </citation>
    <scope>NUCLEOTIDE SEQUENCE [LARGE SCALE GENOMIC DNA]</scope>
    <source>
        <strain>AX4</strain>
    </source>
</reference>
<gene>
    <name type="primary">gacII</name>
    <name type="ORF">DDB_G0278069</name>
</gene>
<name>GACII_DICDI</name>
<sequence length="817" mass="89956">MVRKLFNTSHKKELILDVDTTIVKIGTPKNVVLLTKWLDANGAIKEEGVFRVNGNTTTMEQIKKNFSQGKDDLTKYTSADIHSMAGCLKFILRELPEPIFTWDFYPIFIKIQCLQDESRKLFFLKMLIHGLPYTSRTLVFQLFGFLSKFSVHQDQNKMTPKNLATVFAPNVLRPKKEEDNFQLMNNQDSIGVIETLIEEFQYISNIQKNTLNSQEIKVKSVLPFDETTNAITQQSLVEDYLIAKANTPQESSSFKKNLPFKKGDIIKLLYIKNDGNFIGEINGITGNLSQTYVDIIDISELAEAFTLTPPPIPTLPIASTILHTPPTSSSSSSSSSSSSILLTDNQPKLCSSTPRINNSPSSFSPSLSSTTPQLLVQQSPRQSPRQIPSISLIVEPNNTNQPSFGHGTLQRTSTGYFSSKPLSISQPINMSKPTNMSPPTHHAMSMHNLPPSNTTRENHLPPLPTKPPPLTIPSSSSLPTTPIKQQPQQPIQQPLTPQNHHHHHHHNNLSSSVNTANTGNCANILSPNSDRYLSSRSQSSVHLSGSSSSSSSSSSSSSSSSSSSSSTSNRKFDFSLKSKSSKNSPSKNLPPQPTTTSTLTPPPPPTITTTTTTTTTTTTTTIATTPPPPSKPLPNIPVKDQQFNTLKRSTIEIPPPTITSTNINNNNNTINPRTLNYSFSSFSITYNNSQLGGQLSQEEPPGGVKSQSSYLDNNNLPSRNTNIPNLPPRPPPLNIPQQQQQYKPLPSPPQLQSPQSSLNQSLQIPLQQQQQVQQQKLTTHYILPPQNTNLSGKNLQRSSTSMLLNKLPPPPFSFNKN</sequence>